<accession>B2VGA3</accession>
<feature type="chain" id="PRO_1000137069" description="Acetylornithine deacetylase">
    <location>
        <begin position="1"/>
        <end position="383"/>
    </location>
</feature>
<feature type="active site" evidence="1">
    <location>
        <position position="82"/>
    </location>
</feature>
<feature type="active site" evidence="1">
    <location>
        <position position="144"/>
    </location>
</feature>
<feature type="binding site" evidence="1">
    <location>
        <position position="80"/>
    </location>
    <ligand>
        <name>Zn(2+)</name>
        <dbReference type="ChEBI" id="CHEBI:29105"/>
        <label>1</label>
    </ligand>
</feature>
<feature type="binding site" evidence="1">
    <location>
        <position position="112"/>
    </location>
    <ligand>
        <name>Zn(2+)</name>
        <dbReference type="ChEBI" id="CHEBI:29105"/>
        <label>1</label>
    </ligand>
</feature>
<feature type="binding site" evidence="1">
    <location>
        <position position="112"/>
    </location>
    <ligand>
        <name>Zn(2+)</name>
        <dbReference type="ChEBI" id="CHEBI:29105"/>
        <label>2</label>
    </ligand>
</feature>
<feature type="binding site" evidence="1">
    <location>
        <position position="145"/>
    </location>
    <ligand>
        <name>Zn(2+)</name>
        <dbReference type="ChEBI" id="CHEBI:29105"/>
        <label>2</label>
    </ligand>
</feature>
<feature type="binding site" evidence="1">
    <location>
        <position position="169"/>
    </location>
    <ligand>
        <name>Zn(2+)</name>
        <dbReference type="ChEBI" id="CHEBI:29105"/>
        <label>1</label>
    </ligand>
</feature>
<feature type="binding site" evidence="1">
    <location>
        <position position="355"/>
    </location>
    <ligand>
        <name>Zn(2+)</name>
        <dbReference type="ChEBI" id="CHEBI:29105"/>
        <label>2</label>
    </ligand>
</feature>
<protein>
    <recommendedName>
        <fullName evidence="1">Acetylornithine deacetylase</fullName>
        <shortName evidence="1">AO</shortName>
        <shortName evidence="1">Acetylornithinase</shortName>
        <ecNumber evidence="1">3.5.1.16</ecNumber>
    </recommendedName>
    <alternativeName>
        <fullName evidence="1">N-acetylornithinase</fullName>
        <shortName evidence="1">NAO</shortName>
    </alternativeName>
</protein>
<comment type="function">
    <text evidence="1">Catalyzes the hydrolysis of the amide bond of N(2)-acetylated L-amino acids. Cleaves the acetyl group from N-acetyl-L-ornithine to form L-ornithine, an intermediate in L-arginine biosynthesis pathway, and a branchpoint in the synthesis of polyamines.</text>
</comment>
<comment type="catalytic activity">
    <reaction evidence="1">
        <text>N(2)-acetyl-L-ornithine + H2O = L-ornithine + acetate</text>
        <dbReference type="Rhea" id="RHEA:15941"/>
        <dbReference type="ChEBI" id="CHEBI:15377"/>
        <dbReference type="ChEBI" id="CHEBI:30089"/>
        <dbReference type="ChEBI" id="CHEBI:46911"/>
        <dbReference type="ChEBI" id="CHEBI:57805"/>
        <dbReference type="EC" id="3.5.1.16"/>
    </reaction>
</comment>
<comment type="cofactor">
    <cofactor evidence="1">
        <name>Zn(2+)</name>
        <dbReference type="ChEBI" id="CHEBI:29105"/>
    </cofactor>
    <cofactor evidence="1">
        <name>Co(2+)</name>
        <dbReference type="ChEBI" id="CHEBI:48828"/>
    </cofactor>
    <text evidence="1">Binds 2 Zn(2+) or Co(2+) ions per subunit.</text>
</comment>
<comment type="cofactor">
    <cofactor evidence="1">
        <name>glutathione</name>
        <dbReference type="ChEBI" id="CHEBI:57925"/>
    </cofactor>
</comment>
<comment type="pathway">
    <text evidence="1">Amino-acid biosynthesis; L-arginine biosynthesis; L-ornithine from N(2)-acetyl-L-ornithine (linear): step 1/1.</text>
</comment>
<comment type="subunit">
    <text evidence="1">Homodimer.</text>
</comment>
<comment type="subcellular location">
    <subcellularLocation>
        <location evidence="1">Cytoplasm</location>
    </subcellularLocation>
</comment>
<comment type="similarity">
    <text evidence="1">Belongs to the peptidase M20A family. ArgE subfamily.</text>
</comment>
<evidence type="ECO:0000255" key="1">
    <source>
        <dbReference type="HAMAP-Rule" id="MF_01108"/>
    </source>
</evidence>
<dbReference type="EC" id="3.5.1.16" evidence="1"/>
<dbReference type="EMBL" id="CU468135">
    <property type="protein sequence ID" value="CAO95180.1"/>
    <property type="molecule type" value="Genomic_DNA"/>
</dbReference>
<dbReference type="RefSeq" id="WP_012439904.1">
    <property type="nucleotide sequence ID" value="NC_010694.1"/>
</dbReference>
<dbReference type="SMR" id="B2VGA3"/>
<dbReference type="STRING" id="465817.ETA_01340"/>
<dbReference type="MEROPS" id="M20.974"/>
<dbReference type="KEGG" id="eta:ETA_01340"/>
<dbReference type="eggNOG" id="COG0624">
    <property type="taxonomic scope" value="Bacteria"/>
</dbReference>
<dbReference type="HOGENOM" id="CLU_021802_2_4_6"/>
<dbReference type="OrthoDB" id="3665926at2"/>
<dbReference type="UniPathway" id="UPA00068">
    <property type="reaction ID" value="UER00110"/>
</dbReference>
<dbReference type="Proteomes" id="UP000001726">
    <property type="component" value="Chromosome"/>
</dbReference>
<dbReference type="GO" id="GO:0005737">
    <property type="term" value="C:cytoplasm"/>
    <property type="evidence" value="ECO:0007669"/>
    <property type="project" value="UniProtKB-SubCell"/>
</dbReference>
<dbReference type="GO" id="GO:0008777">
    <property type="term" value="F:acetylornithine deacetylase activity"/>
    <property type="evidence" value="ECO:0007669"/>
    <property type="project" value="UniProtKB-UniRule"/>
</dbReference>
<dbReference type="GO" id="GO:0008270">
    <property type="term" value="F:zinc ion binding"/>
    <property type="evidence" value="ECO:0007669"/>
    <property type="project" value="UniProtKB-UniRule"/>
</dbReference>
<dbReference type="GO" id="GO:0006526">
    <property type="term" value="P:L-arginine biosynthetic process"/>
    <property type="evidence" value="ECO:0007669"/>
    <property type="project" value="UniProtKB-UniRule"/>
</dbReference>
<dbReference type="CDD" id="cd03894">
    <property type="entry name" value="M20_ArgE"/>
    <property type="match status" value="1"/>
</dbReference>
<dbReference type="FunFam" id="3.30.70.360:FF:000003">
    <property type="entry name" value="Acetylornithine deacetylase"/>
    <property type="match status" value="1"/>
</dbReference>
<dbReference type="Gene3D" id="3.30.70.360">
    <property type="match status" value="1"/>
</dbReference>
<dbReference type="Gene3D" id="3.40.630.10">
    <property type="entry name" value="Zn peptidases"/>
    <property type="match status" value="1"/>
</dbReference>
<dbReference type="HAMAP" id="MF_01108">
    <property type="entry name" value="ArgE"/>
    <property type="match status" value="1"/>
</dbReference>
<dbReference type="InterPro" id="IPR010169">
    <property type="entry name" value="AcOrn-deacetyl"/>
</dbReference>
<dbReference type="InterPro" id="IPR001261">
    <property type="entry name" value="ArgE/DapE_CS"/>
</dbReference>
<dbReference type="InterPro" id="IPR036264">
    <property type="entry name" value="Bact_exopeptidase_dim_dom"/>
</dbReference>
<dbReference type="InterPro" id="IPR002933">
    <property type="entry name" value="Peptidase_M20"/>
</dbReference>
<dbReference type="InterPro" id="IPR011650">
    <property type="entry name" value="Peptidase_M20_dimer"/>
</dbReference>
<dbReference type="InterPro" id="IPR050072">
    <property type="entry name" value="Peptidase_M20A"/>
</dbReference>
<dbReference type="NCBIfam" id="TIGR01892">
    <property type="entry name" value="AcOrn-deacetyl"/>
    <property type="match status" value="1"/>
</dbReference>
<dbReference type="NCBIfam" id="NF003474">
    <property type="entry name" value="PRK05111.1"/>
    <property type="match status" value="1"/>
</dbReference>
<dbReference type="PANTHER" id="PTHR43808">
    <property type="entry name" value="ACETYLORNITHINE DEACETYLASE"/>
    <property type="match status" value="1"/>
</dbReference>
<dbReference type="PANTHER" id="PTHR43808:SF1">
    <property type="entry name" value="ACETYLORNITHINE DEACETYLASE"/>
    <property type="match status" value="1"/>
</dbReference>
<dbReference type="Pfam" id="PF07687">
    <property type="entry name" value="M20_dimer"/>
    <property type="match status" value="1"/>
</dbReference>
<dbReference type="Pfam" id="PF01546">
    <property type="entry name" value="Peptidase_M20"/>
    <property type="match status" value="1"/>
</dbReference>
<dbReference type="SUPFAM" id="SSF55031">
    <property type="entry name" value="Bacterial exopeptidase dimerisation domain"/>
    <property type="match status" value="1"/>
</dbReference>
<dbReference type="SUPFAM" id="SSF53187">
    <property type="entry name" value="Zn-dependent exopeptidases"/>
    <property type="match status" value="1"/>
</dbReference>
<dbReference type="PROSITE" id="PS00758">
    <property type="entry name" value="ARGE_DAPE_CPG2_1"/>
    <property type="match status" value="1"/>
</dbReference>
<dbReference type="PROSITE" id="PS00759">
    <property type="entry name" value="ARGE_DAPE_CPG2_2"/>
    <property type="match status" value="1"/>
</dbReference>
<reference key="1">
    <citation type="journal article" date="2008" name="Environ. Microbiol.">
        <title>The genome of Erwinia tasmaniensis strain Et1/99, a non-pathogenic bacterium in the genus Erwinia.</title>
        <authorList>
            <person name="Kube M."/>
            <person name="Migdoll A.M."/>
            <person name="Mueller I."/>
            <person name="Kuhl H."/>
            <person name="Beck A."/>
            <person name="Reinhardt R."/>
            <person name="Geider K."/>
        </authorList>
    </citation>
    <scope>NUCLEOTIDE SEQUENCE [LARGE SCALE GENOMIC DNA]</scope>
    <source>
        <strain>DSM 17950 / CFBP 7177 / CIP 109463 / NCPPB 4357 / Et1/99</strain>
    </source>
</reference>
<name>ARGE_ERWT9</name>
<keyword id="KW-0028">Amino-acid biosynthesis</keyword>
<keyword id="KW-0055">Arginine biosynthesis</keyword>
<keyword id="KW-0170">Cobalt</keyword>
<keyword id="KW-0963">Cytoplasm</keyword>
<keyword id="KW-0378">Hydrolase</keyword>
<keyword id="KW-0479">Metal-binding</keyword>
<keyword id="KW-1185">Reference proteome</keyword>
<keyword id="KW-0862">Zinc</keyword>
<organism>
    <name type="scientific">Erwinia tasmaniensis (strain DSM 17950 / CFBP 7177 / CIP 109463 / NCPPB 4357 / Et1/99)</name>
    <dbReference type="NCBI Taxonomy" id="465817"/>
    <lineage>
        <taxon>Bacteria</taxon>
        <taxon>Pseudomonadati</taxon>
        <taxon>Pseudomonadota</taxon>
        <taxon>Gammaproteobacteria</taxon>
        <taxon>Enterobacterales</taxon>
        <taxon>Erwiniaceae</taxon>
        <taxon>Erwinia</taxon>
    </lineage>
</organism>
<gene>
    <name evidence="1" type="primary">argE</name>
    <name type="ordered locus">ETA_01340</name>
</gene>
<proteinExistence type="inferred from homology"/>
<sequence>MKTKLPNFIEIYRQLIATPSISATDSALDQSNETLINLLGGWFRDLGFTVEVQPVPGTRNKFNMLAKSGSGAGGLLLAGHTDTVPFDDGRWTRDPFTLTEHDNKLYGLGTADMKGFFAFILDTLRDVELSTLKKPLYILATADEETTMAGAKYFSESTALRPDCAIIGEPTSLKPVRAHKGHISNAIRIQGQSGHSSDPGRGVNAIELMHESITQLMALRNTLKERYRHAGFAIPYPTMNFGHIHGGDAANRICACCELHMDIRPLPGLTLSDLDGLLNEALAPVSARWPGRLTVGELHPPIPGYECPREHQLVQVVEKLLGRETEVVNYCTEAPFIQQVCPTLVLGPGSIEQAHQPDEFIDTAFIKPTRDLIAQVVHHFCHH</sequence>